<dbReference type="EC" id="1.11.1.24" evidence="1"/>
<dbReference type="EMBL" id="AE017226">
    <property type="protein sequence ID" value="AAS10509.1"/>
    <property type="status" value="ALT_INIT"/>
    <property type="molecule type" value="Genomic_DNA"/>
</dbReference>
<dbReference type="RefSeq" id="NP_970628.1">
    <property type="nucleotide sequence ID" value="NC_002967.9"/>
</dbReference>
<dbReference type="SMR" id="Q73RS4"/>
<dbReference type="STRING" id="243275.TDE_0011"/>
<dbReference type="PaxDb" id="243275-TDE_0011"/>
<dbReference type="KEGG" id="tde:TDE_0011"/>
<dbReference type="PATRIC" id="fig|243275.7.peg.13"/>
<dbReference type="eggNOG" id="COG0450">
    <property type="taxonomic scope" value="Bacteria"/>
</dbReference>
<dbReference type="HOGENOM" id="CLU_042529_4_4_12"/>
<dbReference type="OrthoDB" id="9812811at2"/>
<dbReference type="Proteomes" id="UP000008212">
    <property type="component" value="Chromosome"/>
</dbReference>
<dbReference type="GO" id="GO:0005829">
    <property type="term" value="C:cytosol"/>
    <property type="evidence" value="ECO:0007669"/>
    <property type="project" value="TreeGrafter"/>
</dbReference>
<dbReference type="GO" id="GO:0008379">
    <property type="term" value="F:thioredoxin peroxidase activity"/>
    <property type="evidence" value="ECO:0007669"/>
    <property type="project" value="TreeGrafter"/>
</dbReference>
<dbReference type="GO" id="GO:0045454">
    <property type="term" value="P:cell redox homeostasis"/>
    <property type="evidence" value="ECO:0007669"/>
    <property type="project" value="TreeGrafter"/>
</dbReference>
<dbReference type="GO" id="GO:0033554">
    <property type="term" value="P:cellular response to stress"/>
    <property type="evidence" value="ECO:0007669"/>
    <property type="project" value="TreeGrafter"/>
</dbReference>
<dbReference type="GO" id="GO:0042744">
    <property type="term" value="P:hydrogen peroxide catabolic process"/>
    <property type="evidence" value="ECO:0007669"/>
    <property type="project" value="TreeGrafter"/>
</dbReference>
<dbReference type="GO" id="GO:0006979">
    <property type="term" value="P:response to oxidative stress"/>
    <property type="evidence" value="ECO:0007669"/>
    <property type="project" value="TreeGrafter"/>
</dbReference>
<dbReference type="CDD" id="cd03016">
    <property type="entry name" value="PRX_1cys"/>
    <property type="match status" value="1"/>
</dbReference>
<dbReference type="FunFam" id="3.40.30.10:FF:000011">
    <property type="entry name" value="Peroxiredoxin PRX1"/>
    <property type="match status" value="1"/>
</dbReference>
<dbReference type="Gene3D" id="3.30.1020.10">
    <property type="entry name" value="Antioxidant, Horf6, Chain A, domain2"/>
    <property type="match status" value="1"/>
</dbReference>
<dbReference type="Gene3D" id="3.40.30.10">
    <property type="entry name" value="Glutaredoxin"/>
    <property type="match status" value="1"/>
</dbReference>
<dbReference type="HAMAP" id="MF_00401">
    <property type="entry name" value="Peroxiredoxin"/>
    <property type="match status" value="1"/>
</dbReference>
<dbReference type="InterPro" id="IPR000866">
    <property type="entry name" value="AhpC/TSA"/>
</dbReference>
<dbReference type="InterPro" id="IPR050217">
    <property type="entry name" value="Peroxiredoxin"/>
</dbReference>
<dbReference type="InterPro" id="IPR024706">
    <property type="entry name" value="Peroxiredoxin_AhpC-typ"/>
</dbReference>
<dbReference type="InterPro" id="IPR019479">
    <property type="entry name" value="Peroxiredoxin_C"/>
</dbReference>
<dbReference type="InterPro" id="IPR022915">
    <property type="entry name" value="Peroxiredoxin_TDXH"/>
</dbReference>
<dbReference type="InterPro" id="IPR045020">
    <property type="entry name" value="PRX_1cys"/>
</dbReference>
<dbReference type="InterPro" id="IPR036249">
    <property type="entry name" value="Thioredoxin-like_sf"/>
</dbReference>
<dbReference type="InterPro" id="IPR013766">
    <property type="entry name" value="Thioredoxin_domain"/>
</dbReference>
<dbReference type="NCBIfam" id="NF009668">
    <property type="entry name" value="PRK13189.1"/>
    <property type="match status" value="1"/>
</dbReference>
<dbReference type="PANTHER" id="PTHR10681">
    <property type="entry name" value="THIOREDOXIN PEROXIDASE"/>
    <property type="match status" value="1"/>
</dbReference>
<dbReference type="PANTHER" id="PTHR10681:SF128">
    <property type="entry name" value="THIOREDOXIN-DEPENDENT PEROXIDE REDUCTASE, MITOCHONDRIAL"/>
    <property type="match status" value="1"/>
</dbReference>
<dbReference type="Pfam" id="PF10417">
    <property type="entry name" value="1-cysPrx_C"/>
    <property type="match status" value="1"/>
</dbReference>
<dbReference type="Pfam" id="PF00578">
    <property type="entry name" value="AhpC-TSA"/>
    <property type="match status" value="1"/>
</dbReference>
<dbReference type="PIRSF" id="PIRSF000239">
    <property type="entry name" value="AHPC"/>
    <property type="match status" value="1"/>
</dbReference>
<dbReference type="SUPFAM" id="SSF52833">
    <property type="entry name" value="Thioredoxin-like"/>
    <property type="match status" value="1"/>
</dbReference>
<dbReference type="PROSITE" id="PS51352">
    <property type="entry name" value="THIOREDOXIN_2"/>
    <property type="match status" value="1"/>
</dbReference>
<feature type="chain" id="PRO_0000135180" description="Peroxiredoxin">
    <location>
        <begin position="1"/>
        <end position="208"/>
    </location>
</feature>
<feature type="domain" description="Thioredoxin" evidence="1">
    <location>
        <begin position="2"/>
        <end position="156"/>
    </location>
</feature>
<feature type="active site" description="Cysteine sulfenic acid (-SOH) intermediate" evidence="1">
    <location>
        <position position="44"/>
    </location>
</feature>
<feature type="binding site" evidence="1">
    <location>
        <position position="119"/>
    </location>
    <ligand>
        <name>substrate</name>
    </ligand>
</feature>
<feature type="disulfide bond" description="Interchain (with C-204); in linked form" evidence="1">
    <location>
        <position position="44"/>
    </location>
</feature>
<feature type="disulfide bond" description="Interchain (with C-44); in linked form" evidence="1">
    <location>
        <position position="204"/>
    </location>
</feature>
<evidence type="ECO:0000255" key="1">
    <source>
        <dbReference type="HAMAP-Rule" id="MF_00401"/>
    </source>
</evidence>
<evidence type="ECO:0000305" key="2"/>
<sequence>MPLLGDDFPQLAVSTTHGPMKLPCDLKGSWFVLFSHPADFTPVCTTEFVAFQKLMPEFEKLGVKLIGLSIDQIQSHLKWIEWIKEKLGVEITFPVIAANDSIANQIGLLHPGKGTNTVRAVFIVDPNGKVRLVLYYPQEIGRNMEEIVRAVKALQTSDKNKVALPADWPNNGLIKDRAIIPPPPTEAEAKKRLKEYDGYDFWFCHKSL</sequence>
<accession>Q73RS4</accession>
<protein>
    <recommendedName>
        <fullName evidence="1">Peroxiredoxin</fullName>
        <ecNumber evidence="1">1.11.1.24</ecNumber>
    </recommendedName>
    <alternativeName>
        <fullName evidence="1">Thioredoxin peroxidase</fullName>
    </alternativeName>
    <alternativeName>
        <fullName evidence="1">Thioredoxin-dependent peroxiredoxin</fullName>
    </alternativeName>
</protein>
<organism>
    <name type="scientific">Treponema denticola (strain ATCC 35405 / DSM 14222 / CIP 103919 / JCM 8153 / KCTC 15104)</name>
    <dbReference type="NCBI Taxonomy" id="243275"/>
    <lineage>
        <taxon>Bacteria</taxon>
        <taxon>Pseudomonadati</taxon>
        <taxon>Spirochaetota</taxon>
        <taxon>Spirochaetia</taxon>
        <taxon>Spirochaetales</taxon>
        <taxon>Treponemataceae</taxon>
        <taxon>Treponema</taxon>
    </lineage>
</organism>
<gene>
    <name type="ordered locus">TDE_0011</name>
</gene>
<keyword id="KW-0049">Antioxidant</keyword>
<keyword id="KW-0963">Cytoplasm</keyword>
<keyword id="KW-1015">Disulfide bond</keyword>
<keyword id="KW-0560">Oxidoreductase</keyword>
<keyword id="KW-0575">Peroxidase</keyword>
<keyword id="KW-0676">Redox-active center</keyword>
<keyword id="KW-1185">Reference proteome</keyword>
<name>TDXH_TREDE</name>
<reference key="1">
    <citation type="journal article" date="2004" name="Proc. Natl. Acad. Sci. U.S.A.">
        <title>Comparison of the genome of the oral pathogen Treponema denticola with other spirochete genomes.</title>
        <authorList>
            <person name="Seshadri R."/>
            <person name="Myers G.S.A."/>
            <person name="Tettelin H."/>
            <person name="Eisen J.A."/>
            <person name="Heidelberg J.F."/>
            <person name="Dodson R.J."/>
            <person name="Davidsen T.M."/>
            <person name="DeBoy R.T."/>
            <person name="Fouts D.E."/>
            <person name="Haft D.H."/>
            <person name="Selengut J."/>
            <person name="Ren Q."/>
            <person name="Brinkac L.M."/>
            <person name="Madupu R."/>
            <person name="Kolonay J.F."/>
            <person name="Durkin S.A."/>
            <person name="Daugherty S.C."/>
            <person name="Shetty J."/>
            <person name="Shvartsbeyn A."/>
            <person name="Gebregeorgis E."/>
            <person name="Geer K."/>
            <person name="Tsegaye G."/>
            <person name="Malek J.A."/>
            <person name="Ayodeji B."/>
            <person name="Shatsman S."/>
            <person name="McLeod M.P."/>
            <person name="Smajs D."/>
            <person name="Howell J.K."/>
            <person name="Pal S."/>
            <person name="Amin A."/>
            <person name="Vashisth P."/>
            <person name="McNeill T.Z."/>
            <person name="Xiang Q."/>
            <person name="Sodergren E."/>
            <person name="Baca E."/>
            <person name="Weinstock G.M."/>
            <person name="Norris S.J."/>
            <person name="Fraser C.M."/>
            <person name="Paulsen I.T."/>
        </authorList>
    </citation>
    <scope>NUCLEOTIDE SEQUENCE [LARGE SCALE GENOMIC DNA]</scope>
    <source>
        <strain>ATCC 35405 / DSM 14222 / CIP 103919 / JCM 8153 / KCTC 15104</strain>
    </source>
</reference>
<comment type="function">
    <text evidence="1">Thiol-specific peroxidase that catalyzes the reduction of hydrogen peroxide and organic hydroperoxides to water and alcohols, respectively. Plays a role in cell protection against oxidative stress by detoxifying peroxides.</text>
</comment>
<comment type="catalytic activity">
    <reaction evidence="1">
        <text>a hydroperoxide + [thioredoxin]-dithiol = an alcohol + [thioredoxin]-disulfide + H2O</text>
        <dbReference type="Rhea" id="RHEA:62620"/>
        <dbReference type="Rhea" id="RHEA-COMP:10698"/>
        <dbReference type="Rhea" id="RHEA-COMP:10700"/>
        <dbReference type="ChEBI" id="CHEBI:15377"/>
        <dbReference type="ChEBI" id="CHEBI:29950"/>
        <dbReference type="ChEBI" id="CHEBI:30879"/>
        <dbReference type="ChEBI" id="CHEBI:35924"/>
        <dbReference type="ChEBI" id="CHEBI:50058"/>
        <dbReference type="EC" id="1.11.1.24"/>
    </reaction>
</comment>
<comment type="subunit">
    <text evidence="1">Homodecamer. Pentamer of dimers that assemble into a ring structure.</text>
</comment>
<comment type="subcellular location">
    <subcellularLocation>
        <location evidence="1">Cytoplasm</location>
    </subcellularLocation>
</comment>
<comment type="miscellaneous">
    <text evidence="1">The active site is a conserved redox-active cysteine residue, the peroxidatic cysteine (C(P)), which makes the nucleophilic attack on the peroxide substrate. The peroxide oxidizes the C(P)-SH to cysteine sulfenic acid (C(P)-SOH), which then reacts with another cysteine residue, the resolving cysteine (C(R)), to form a disulfide bridge. The disulfide is subsequently reduced by an appropriate electron donor to complete the catalytic cycle. Although the primary sequence of this enzyme is similar to those of the 1-Cys Prx6 enzymes, its catalytic properties resemble those of the typical 2-Cys Prxs and C(R) is provided by the other dimeric subunit to form an intersubunit disulfide. The disulfide is subsequently reduced by thioredoxin.</text>
</comment>
<comment type="similarity">
    <text evidence="1">Belongs to the peroxiredoxin family. Prx6 subfamily.</text>
</comment>
<comment type="sequence caution" evidence="2">
    <conflict type="erroneous initiation">
        <sequence resource="EMBL-CDS" id="AAS10509"/>
    </conflict>
</comment>
<proteinExistence type="inferred from homology"/>